<protein>
    <recommendedName>
        <fullName>Transcription elongation factor, mitochondrial</fullName>
    </recommendedName>
</protein>
<sequence length="365" mass="41538">MAWRANLACLIKAGGRTRWFPLPEYLSMSPVLHNTCSRRKSTAPEKLAASVAACDTNGKEPGTALGRLYSPEQQASILHVLNTASDKELEAFRLLRGRKSVNIVEHRKKFGPFQSLESLIGVPLIQYKTAVEVCNSILCPENRRRKKSQEKWVLRKFIKPGVEKERLKAVNSIVSIVFGTRRIAWAHLDRKPTVLDWQQAECWKLTNKTYPSSFYLEEISSVVSKIPKADLYILEKSGLSIQNTSLFPILLHFLITEAMLYALLNKTFAKDGQHRVLSINRNAVGKHFDLMIGDTRTSGRELVKQFLSESVLKEQPRVFFPRELAVQYRQKIVKSSHRIEELYDSLLQAVAFYELVFGSGSELKC</sequence>
<gene>
    <name type="primary">Tefm</name>
</gene>
<feature type="transit peptide" description="Mitochondrion" evidence="2">
    <location>
        <begin position="1"/>
        <end position="40"/>
    </location>
</feature>
<feature type="chain" id="PRO_0000406331" description="Transcription elongation factor, mitochondrial">
    <location>
        <begin position="41"/>
        <end position="365"/>
    </location>
</feature>
<reference key="1">
    <citation type="journal article" date="2004" name="Genome Res.">
        <title>The status, quality, and expansion of the NIH full-length cDNA project: the Mammalian Gene Collection (MGC).</title>
        <authorList>
            <consortium name="The MGC Project Team"/>
        </authorList>
    </citation>
    <scope>NUCLEOTIDE SEQUENCE [LARGE SCALE MRNA]</scope>
    <source>
        <tissue>Spleen</tissue>
    </source>
</reference>
<keyword id="KW-0496">Mitochondrion</keyword>
<keyword id="KW-1135">Mitochondrion nucleoid</keyword>
<keyword id="KW-1185">Reference proteome</keyword>
<keyword id="KW-0804">Transcription</keyword>
<keyword id="KW-0805">Transcription regulation</keyword>
<keyword id="KW-0809">Transit peptide</keyword>
<name>TEFM_RAT</name>
<accession>Q4KM51</accession>
<dbReference type="EMBL" id="BC098792">
    <property type="protein sequence ID" value="AAH98792.1"/>
    <property type="molecule type" value="mRNA"/>
</dbReference>
<dbReference type="RefSeq" id="NP_001020797.1">
    <property type="nucleotide sequence ID" value="NM_001025626.1"/>
</dbReference>
<dbReference type="SMR" id="Q4KM51"/>
<dbReference type="FunCoup" id="Q4KM51">
    <property type="interactions" value="1111"/>
</dbReference>
<dbReference type="STRING" id="10116.ENSRNOP00000005325"/>
<dbReference type="PhosphoSitePlus" id="Q4KM51"/>
<dbReference type="PaxDb" id="10116-ENSRNOP00000005325"/>
<dbReference type="GeneID" id="287554"/>
<dbReference type="KEGG" id="rno:287554"/>
<dbReference type="AGR" id="RGD:1306595"/>
<dbReference type="CTD" id="79736"/>
<dbReference type="RGD" id="1306595">
    <property type="gene designation" value="Tefm"/>
</dbReference>
<dbReference type="eggNOG" id="ENOG502QPVB">
    <property type="taxonomic scope" value="Eukaryota"/>
</dbReference>
<dbReference type="InParanoid" id="Q4KM51"/>
<dbReference type="OrthoDB" id="5949570at2759"/>
<dbReference type="PhylomeDB" id="Q4KM51"/>
<dbReference type="TreeFam" id="TF325413"/>
<dbReference type="PRO" id="PR:Q4KM51"/>
<dbReference type="Proteomes" id="UP000002494">
    <property type="component" value="Unplaced"/>
</dbReference>
<dbReference type="GO" id="GO:0005759">
    <property type="term" value="C:mitochondrial matrix"/>
    <property type="evidence" value="ECO:0000250"/>
    <property type="project" value="UniProtKB"/>
</dbReference>
<dbReference type="GO" id="GO:0042645">
    <property type="term" value="C:mitochondrial nucleoid"/>
    <property type="evidence" value="ECO:0000250"/>
    <property type="project" value="UniProtKB"/>
</dbReference>
<dbReference type="GO" id="GO:1990904">
    <property type="term" value="C:ribonucleoprotein complex"/>
    <property type="evidence" value="ECO:0000250"/>
    <property type="project" value="UniProtKB"/>
</dbReference>
<dbReference type="GO" id="GO:0030337">
    <property type="term" value="F:DNA polymerase processivity factor activity"/>
    <property type="evidence" value="ECO:0000318"/>
    <property type="project" value="GO_Central"/>
</dbReference>
<dbReference type="GO" id="GO:0003676">
    <property type="term" value="F:nucleic acid binding"/>
    <property type="evidence" value="ECO:0007669"/>
    <property type="project" value="InterPro"/>
</dbReference>
<dbReference type="GO" id="GO:0003711">
    <property type="term" value="F:transcription elongation factor activity"/>
    <property type="evidence" value="ECO:0000250"/>
    <property type="project" value="UniProtKB"/>
</dbReference>
<dbReference type="GO" id="GO:0006390">
    <property type="term" value="P:mitochondrial transcription"/>
    <property type="evidence" value="ECO:0000318"/>
    <property type="project" value="GO_Central"/>
</dbReference>
<dbReference type="GO" id="GO:1903109">
    <property type="term" value="P:positive regulation of mitochondrial transcription"/>
    <property type="evidence" value="ECO:0000250"/>
    <property type="project" value="UniProtKB"/>
</dbReference>
<dbReference type="GO" id="GO:0002082">
    <property type="term" value="P:regulation of oxidative phosphorylation"/>
    <property type="evidence" value="ECO:0000266"/>
    <property type="project" value="RGD"/>
</dbReference>
<dbReference type="GO" id="GO:0006392">
    <property type="term" value="P:transcription elongation by mitochondrial RNA polymerase"/>
    <property type="evidence" value="ECO:0007669"/>
    <property type="project" value="InterPro"/>
</dbReference>
<dbReference type="FunFam" id="3.30.420.10:FF:000095">
    <property type="entry name" value="Transcription elongation factor, mitochondrial"/>
    <property type="match status" value="1"/>
</dbReference>
<dbReference type="Gene3D" id="3.30.420.10">
    <property type="entry name" value="Ribonuclease H-like superfamily/Ribonuclease H"/>
    <property type="match status" value="1"/>
</dbReference>
<dbReference type="InterPro" id="IPR036397">
    <property type="entry name" value="RNaseH_sf"/>
</dbReference>
<dbReference type="InterPro" id="IPR010994">
    <property type="entry name" value="RuvA_2-like"/>
</dbReference>
<dbReference type="InterPro" id="IPR039150">
    <property type="entry name" value="TEFM"/>
</dbReference>
<dbReference type="PANTHER" id="PTHR21053">
    <property type="entry name" value="TRANSCRIPTION ELONGATION FACTOR, MITOCHONDRIAL"/>
    <property type="match status" value="1"/>
</dbReference>
<dbReference type="PANTHER" id="PTHR21053:SF2">
    <property type="entry name" value="TRANSCRIPTION ELONGATION FACTOR, MITOCHONDRIAL"/>
    <property type="match status" value="1"/>
</dbReference>
<dbReference type="Pfam" id="PF12836">
    <property type="entry name" value="HHH_3"/>
    <property type="match status" value="1"/>
</dbReference>
<dbReference type="SUPFAM" id="SSF47781">
    <property type="entry name" value="RuvA domain 2-like"/>
    <property type="match status" value="1"/>
</dbReference>
<evidence type="ECO:0000250" key="1">
    <source>
        <dbReference type="UniProtKB" id="Q96QE5"/>
    </source>
</evidence>
<evidence type="ECO:0000255" key="2"/>
<evidence type="ECO:0000305" key="3"/>
<organism>
    <name type="scientific">Rattus norvegicus</name>
    <name type="common">Rat</name>
    <dbReference type="NCBI Taxonomy" id="10116"/>
    <lineage>
        <taxon>Eukaryota</taxon>
        <taxon>Metazoa</taxon>
        <taxon>Chordata</taxon>
        <taxon>Craniata</taxon>
        <taxon>Vertebrata</taxon>
        <taxon>Euteleostomi</taxon>
        <taxon>Mammalia</taxon>
        <taxon>Eutheria</taxon>
        <taxon>Euarchontoglires</taxon>
        <taxon>Glires</taxon>
        <taxon>Rodentia</taxon>
        <taxon>Myomorpha</taxon>
        <taxon>Muroidea</taxon>
        <taxon>Muridae</taxon>
        <taxon>Murinae</taxon>
        <taxon>Rattus</taxon>
    </lineage>
</organism>
<proteinExistence type="evidence at transcript level"/>
<comment type="function">
    <text evidence="1">Transcription elongation factor which increases mitochondrial RNA polymerase processivity. Regulates transcription of the mitochondrial genome, including genes important for the oxidative phosphorylation machinery (By similarity).</text>
</comment>
<comment type="subunit">
    <text evidence="1">Interacts with POLRMT.</text>
</comment>
<comment type="subcellular location">
    <subcellularLocation>
        <location evidence="1">Mitochondrion matrix</location>
    </subcellularLocation>
    <subcellularLocation>
        <location evidence="1">Mitochondrion matrix</location>
        <location evidence="1">Mitochondrion nucleoid</location>
    </subcellularLocation>
</comment>
<comment type="similarity">
    <text evidence="3">Belongs to the TEFM family.</text>
</comment>